<proteinExistence type="evidence at transcript level"/>
<sequence>MSESDETKSISSLISSSSSSRPKKYICTYEGCDKAYNRPSLLEQHLRTHSNDRPYKCTVEDCDKAFFRKSHLETHIVSHSEKKPFHCSVCGKGVNSRQHLKRHEITHTKSFKCTFENCQEAFYKHQSLRHHILSVHEKTLTCKQCNKVFTRPSKLAQHKLKHHGGSPAYQCDHPGCFKNFQTWSVLQFHIKQSHPKLKCPKCGKGCVGKKGLSSHMLSHDDSTMIKIWTCDYCDVGKFAKKNELVEHYNIFHDGNIPDDLLKETEVKKLENLLDQGSKLNNLHELETEKLKVEEDEEDEEDSLDEKRSDVRSDSMSAQRSIKSFTASLEGSKSVSKLISNSGKKINCPKNNCDRMFSREYDLRRHLKWHDDNLQRIESFLNSIEKEETPEGEPLVKKARMDLLPNETSVISR</sequence>
<keyword id="KW-0238">DNA-binding</keyword>
<keyword id="KW-0479">Metal-binding</keyword>
<keyword id="KW-0539">Nucleus</keyword>
<keyword id="KW-1185">Reference proteome</keyword>
<keyword id="KW-0677">Repeat</keyword>
<keyword id="KW-0804">Transcription</keyword>
<keyword id="KW-0805">Transcription regulation</keyword>
<keyword id="KW-0862">Zinc</keyword>
<keyword id="KW-0863">Zinc-finger</keyword>
<protein>
    <recommendedName>
        <fullName>Transcription factor IIIA</fullName>
        <shortName>TFIIIA</shortName>
    </recommendedName>
</protein>
<feature type="chain" id="PRO_0000426061" description="Transcription factor IIIA">
    <location>
        <begin position="1"/>
        <end position="412"/>
    </location>
</feature>
<feature type="zinc finger region" description="C2H2-type 1" evidence="2">
    <location>
        <begin position="25"/>
        <end position="49"/>
    </location>
</feature>
<feature type="zinc finger region" description="C2H2-type 2" evidence="2">
    <location>
        <begin position="55"/>
        <end position="79"/>
    </location>
</feature>
<feature type="zinc finger region" description="C2H2-type 3" evidence="2">
    <location>
        <begin position="85"/>
        <end position="107"/>
    </location>
</feature>
<feature type="zinc finger region" description="C2H2-type 4" evidence="2">
    <location>
        <begin position="111"/>
        <end position="136"/>
    </location>
</feature>
<feature type="zinc finger region" description="C2H2-type 5" evidence="2">
    <location>
        <begin position="140"/>
        <end position="162"/>
    </location>
</feature>
<feature type="zinc finger region" description="C2H2-type 6" evidence="2">
    <location>
        <begin position="169"/>
        <end position="194"/>
    </location>
</feature>
<feature type="zinc finger region" description="C2H2-type 7" evidence="2">
    <location>
        <begin position="197"/>
        <end position="219"/>
    </location>
</feature>
<feature type="zinc finger region" description="C2H2-type 8; degenerate" evidence="2">
    <location>
        <begin position="228"/>
        <end position="252"/>
    </location>
</feature>
<feature type="zinc finger region" description="C2H2-type 9" evidence="2">
    <location>
        <begin position="345"/>
        <end position="369"/>
    </location>
</feature>
<feature type="region of interest" description="Disordered" evidence="3">
    <location>
        <begin position="1"/>
        <end position="20"/>
    </location>
</feature>
<feature type="region of interest" description="Disordered" evidence="3">
    <location>
        <begin position="285"/>
        <end position="316"/>
    </location>
</feature>
<feature type="compositionally biased region" description="Low complexity" evidence="3">
    <location>
        <begin position="9"/>
        <end position="20"/>
    </location>
</feature>
<feature type="compositionally biased region" description="Acidic residues" evidence="3">
    <location>
        <begin position="293"/>
        <end position="303"/>
    </location>
</feature>
<dbReference type="EMBL" id="CP017624">
    <property type="protein sequence ID" value="AOW27509.1"/>
    <property type="molecule type" value="Genomic_DNA"/>
</dbReference>
<dbReference type="RefSeq" id="XP_710284.1">
    <property type="nucleotide sequence ID" value="XM_705192.2"/>
</dbReference>
<dbReference type="SMR" id="Q59KL6"/>
<dbReference type="BioGRID" id="1231206">
    <property type="interactions" value="1"/>
</dbReference>
<dbReference type="FunCoup" id="Q59KL6">
    <property type="interactions" value="41"/>
</dbReference>
<dbReference type="STRING" id="237561.Q59KL6"/>
<dbReference type="EnsemblFungi" id="C2_04860W_A-T">
    <property type="protein sequence ID" value="C2_04860W_A-T-p1"/>
    <property type="gene ID" value="C2_04860W_A"/>
</dbReference>
<dbReference type="GeneID" id="3648113"/>
<dbReference type="KEGG" id="cal:CAALFM_C204860WA"/>
<dbReference type="CGD" id="CAL0000184073">
    <property type="gene designation" value="PZF1"/>
</dbReference>
<dbReference type="VEuPathDB" id="FungiDB:C2_04860W_A"/>
<dbReference type="eggNOG" id="KOG1721">
    <property type="taxonomic scope" value="Eukaryota"/>
</dbReference>
<dbReference type="HOGENOM" id="CLU_044102_0_0_1"/>
<dbReference type="InParanoid" id="Q59KL6"/>
<dbReference type="OMA" id="SFYKHPQ"/>
<dbReference type="OrthoDB" id="4748970at2759"/>
<dbReference type="Proteomes" id="UP000000559">
    <property type="component" value="Chromosome 2"/>
</dbReference>
<dbReference type="GO" id="GO:0005634">
    <property type="term" value="C:nucleus"/>
    <property type="evidence" value="ECO:0007669"/>
    <property type="project" value="UniProtKB-SubCell"/>
</dbReference>
<dbReference type="GO" id="GO:0003700">
    <property type="term" value="F:DNA-binding transcription factor activity"/>
    <property type="evidence" value="ECO:0000318"/>
    <property type="project" value="GO_Central"/>
</dbReference>
<dbReference type="GO" id="GO:0000978">
    <property type="term" value="F:RNA polymerase II cis-regulatory region sequence-specific DNA binding"/>
    <property type="evidence" value="ECO:0000318"/>
    <property type="project" value="GO_Central"/>
</dbReference>
<dbReference type="GO" id="GO:0001010">
    <property type="term" value="F:RNA polymerase II sequence-specific DNA-binding transcription factor recruiting activity"/>
    <property type="evidence" value="ECO:0007669"/>
    <property type="project" value="EnsemblFungi"/>
</dbReference>
<dbReference type="GO" id="GO:0001002">
    <property type="term" value="F:RNA polymerase III type 1 promoter sequence-specific DNA binding"/>
    <property type="evidence" value="ECO:0007669"/>
    <property type="project" value="EnsemblFungi"/>
</dbReference>
<dbReference type="GO" id="GO:0008270">
    <property type="term" value="F:zinc ion binding"/>
    <property type="evidence" value="ECO:0007669"/>
    <property type="project" value="UniProtKB-KW"/>
</dbReference>
<dbReference type="GO" id="GO:0042791">
    <property type="term" value="P:5S class rRNA transcription by RNA polymerase III"/>
    <property type="evidence" value="ECO:0007669"/>
    <property type="project" value="EnsemblFungi"/>
</dbReference>
<dbReference type="GO" id="GO:0006357">
    <property type="term" value="P:regulation of transcription by RNA polymerase II"/>
    <property type="evidence" value="ECO:0000318"/>
    <property type="project" value="GO_Central"/>
</dbReference>
<dbReference type="FunFam" id="3.30.160.60:FF:000125">
    <property type="entry name" value="Putative zinc finger protein 143"/>
    <property type="match status" value="1"/>
</dbReference>
<dbReference type="FunFam" id="3.30.160.60:FF:002391">
    <property type="entry name" value="Transcription factor IIIA"/>
    <property type="match status" value="1"/>
</dbReference>
<dbReference type="Gene3D" id="3.30.160.60">
    <property type="entry name" value="Classic Zinc Finger"/>
    <property type="match status" value="5"/>
</dbReference>
<dbReference type="InterPro" id="IPR050636">
    <property type="entry name" value="C2H2-ZF_domain-containing"/>
</dbReference>
<dbReference type="InterPro" id="IPR036236">
    <property type="entry name" value="Znf_C2H2_sf"/>
</dbReference>
<dbReference type="InterPro" id="IPR013087">
    <property type="entry name" value="Znf_C2H2_type"/>
</dbReference>
<dbReference type="PANTHER" id="PTHR47772:SF13">
    <property type="entry name" value="GASTRULA ZINC FINGER PROTEIN XLCGF49.1-LIKE-RELATED"/>
    <property type="match status" value="1"/>
</dbReference>
<dbReference type="PANTHER" id="PTHR47772">
    <property type="entry name" value="ZINC FINGER PROTEIN 200"/>
    <property type="match status" value="1"/>
</dbReference>
<dbReference type="Pfam" id="PF00096">
    <property type="entry name" value="zf-C2H2"/>
    <property type="match status" value="6"/>
</dbReference>
<dbReference type="SMART" id="SM00355">
    <property type="entry name" value="ZnF_C2H2"/>
    <property type="match status" value="9"/>
</dbReference>
<dbReference type="SUPFAM" id="SSF57667">
    <property type="entry name" value="beta-beta-alpha zinc fingers"/>
    <property type="match status" value="3"/>
</dbReference>
<dbReference type="PROSITE" id="PS00028">
    <property type="entry name" value="ZINC_FINGER_C2H2_1"/>
    <property type="match status" value="8"/>
</dbReference>
<dbReference type="PROSITE" id="PS50157">
    <property type="entry name" value="ZINC_FINGER_C2H2_2"/>
    <property type="match status" value="7"/>
</dbReference>
<gene>
    <name type="primary">PZF1</name>
    <name type="ordered locus">CAALFM_C204860WA</name>
    <name type="ORF">CaO19.4125</name>
    <name type="ORF">orf19.4125</name>
</gene>
<comment type="function">
    <text evidence="1">Transcription factor required for transcription of 5S rRNA by RNA polymerase III.</text>
</comment>
<comment type="subcellular location">
    <subcellularLocation>
        <location evidence="1">Nucleus</location>
    </subcellularLocation>
</comment>
<comment type="induction">
    <text evidence="4 5">Expression is induced by HAP43 and during biofilm formation.</text>
</comment>
<evidence type="ECO:0000250" key="1"/>
<evidence type="ECO:0000255" key="2">
    <source>
        <dbReference type="PROSITE-ProRule" id="PRU00042"/>
    </source>
</evidence>
<evidence type="ECO:0000256" key="3">
    <source>
        <dbReference type="SAM" id="MobiDB-lite"/>
    </source>
</evidence>
<evidence type="ECO:0000269" key="4">
    <source>
    </source>
</evidence>
<evidence type="ECO:0000269" key="5">
    <source>
    </source>
</evidence>
<reference key="1">
    <citation type="journal article" date="2004" name="Proc. Natl. Acad. Sci. U.S.A.">
        <title>The diploid genome sequence of Candida albicans.</title>
        <authorList>
            <person name="Jones T."/>
            <person name="Federspiel N.A."/>
            <person name="Chibana H."/>
            <person name="Dungan J."/>
            <person name="Kalman S."/>
            <person name="Magee B.B."/>
            <person name="Newport G."/>
            <person name="Thorstenson Y.R."/>
            <person name="Agabian N."/>
            <person name="Magee P.T."/>
            <person name="Davis R.W."/>
            <person name="Scherer S."/>
        </authorList>
    </citation>
    <scope>NUCLEOTIDE SEQUENCE [LARGE SCALE GENOMIC DNA]</scope>
    <source>
        <strain>SC5314 / ATCC MYA-2876</strain>
    </source>
</reference>
<reference key="2">
    <citation type="journal article" date="2007" name="Genome Biol.">
        <title>Assembly of the Candida albicans genome into sixteen supercontigs aligned on the eight chromosomes.</title>
        <authorList>
            <person name="van het Hoog M."/>
            <person name="Rast T.J."/>
            <person name="Martchenko M."/>
            <person name="Grindle S."/>
            <person name="Dignard D."/>
            <person name="Hogues H."/>
            <person name="Cuomo C."/>
            <person name="Berriman M."/>
            <person name="Scherer S."/>
            <person name="Magee B.B."/>
            <person name="Whiteway M."/>
            <person name="Chibana H."/>
            <person name="Nantel A."/>
            <person name="Magee P.T."/>
        </authorList>
    </citation>
    <scope>GENOME REANNOTATION</scope>
    <source>
        <strain>SC5314 / ATCC MYA-2876</strain>
    </source>
</reference>
<reference key="3">
    <citation type="journal article" date="2013" name="Genome Biol.">
        <title>Assembly of a phased diploid Candida albicans genome facilitates allele-specific measurements and provides a simple model for repeat and indel structure.</title>
        <authorList>
            <person name="Muzzey D."/>
            <person name="Schwartz K."/>
            <person name="Weissman J.S."/>
            <person name="Sherlock G."/>
        </authorList>
    </citation>
    <scope>NUCLEOTIDE SEQUENCE [LARGE SCALE GENOMIC DNA]</scope>
    <scope>GENOME REANNOTATION</scope>
    <source>
        <strain>SC5314 / ATCC MYA-2876</strain>
    </source>
</reference>
<reference key="4">
    <citation type="journal article" date="2011" name="J. Biol. Chem.">
        <title>Cap2-HAP complex is a critical transcriptional regulator that has dual but contrasting roles in regulation of iron homeostasis in Candida albicans.</title>
        <authorList>
            <person name="Singh R.P."/>
            <person name="Prasad H.K."/>
            <person name="Sinha I."/>
            <person name="Agarwal N."/>
            <person name="Natarajan K."/>
        </authorList>
    </citation>
    <scope>INDUCTION</scope>
</reference>
<reference key="5">
    <citation type="journal article" date="2012" name="Cell">
        <title>A recently evolved transcriptional network controls biofilm development in Candida albicans.</title>
        <authorList>
            <person name="Nobile C.J."/>
            <person name="Fox E.P."/>
            <person name="Nett J.E."/>
            <person name="Sorrells T.R."/>
            <person name="Mitrovich Q.M."/>
            <person name="Hernday A.D."/>
            <person name="Tuch B.B."/>
            <person name="Andes D.R."/>
            <person name="Johnson A.D."/>
        </authorList>
    </citation>
    <scope>INDUCTION</scope>
</reference>
<organism>
    <name type="scientific">Candida albicans (strain SC5314 / ATCC MYA-2876)</name>
    <name type="common">Yeast</name>
    <dbReference type="NCBI Taxonomy" id="237561"/>
    <lineage>
        <taxon>Eukaryota</taxon>
        <taxon>Fungi</taxon>
        <taxon>Dikarya</taxon>
        <taxon>Ascomycota</taxon>
        <taxon>Saccharomycotina</taxon>
        <taxon>Pichiomycetes</taxon>
        <taxon>Debaryomycetaceae</taxon>
        <taxon>Candida/Lodderomyces clade</taxon>
        <taxon>Candida</taxon>
    </lineage>
</organism>
<name>TF3A_CANAL</name>
<accession>Q59KL6</accession>
<accession>A0A1D8PHA1</accession>